<feature type="chain" id="PRO_1000095359" description="Arginine--tRNA ligase">
    <location>
        <begin position="1"/>
        <end position="563"/>
    </location>
</feature>
<feature type="short sequence motif" description="'HIGH' region">
    <location>
        <begin position="137"/>
        <end position="147"/>
    </location>
</feature>
<reference key="1">
    <citation type="submission" date="2007-10" db="EMBL/GenBank/DDBJ databases">
        <title>Complete sequence of chromosome of Desulforudis audaxviator MP104C.</title>
        <authorList>
            <person name="Copeland A."/>
            <person name="Lucas S."/>
            <person name="Lapidus A."/>
            <person name="Barry K."/>
            <person name="Glavina del Rio T."/>
            <person name="Dalin E."/>
            <person name="Tice H."/>
            <person name="Bruce D."/>
            <person name="Pitluck S."/>
            <person name="Lowry S.R."/>
            <person name="Larimer F."/>
            <person name="Land M.L."/>
            <person name="Hauser L."/>
            <person name="Kyrpides N."/>
            <person name="Ivanova N.N."/>
            <person name="Richardson P."/>
        </authorList>
    </citation>
    <scope>NUCLEOTIDE SEQUENCE [LARGE SCALE GENOMIC DNA]</scope>
    <source>
        <strain>MP104C</strain>
    </source>
</reference>
<name>SYR_DESAP</name>
<protein>
    <recommendedName>
        <fullName evidence="1">Arginine--tRNA ligase</fullName>
        <ecNumber evidence="1">6.1.1.19</ecNumber>
    </recommendedName>
    <alternativeName>
        <fullName evidence="1">Arginyl-tRNA synthetase</fullName>
        <shortName evidence="1">ArgRS</shortName>
    </alternativeName>
</protein>
<gene>
    <name evidence="1" type="primary">argS</name>
    <name type="ordered locus">Daud_2181</name>
</gene>
<organism>
    <name type="scientific">Desulforudis audaxviator (strain MP104C)</name>
    <dbReference type="NCBI Taxonomy" id="477974"/>
    <lineage>
        <taxon>Bacteria</taxon>
        <taxon>Bacillati</taxon>
        <taxon>Bacillota</taxon>
        <taxon>Clostridia</taxon>
        <taxon>Thermoanaerobacterales</taxon>
        <taxon>Candidatus Desulforudaceae</taxon>
        <taxon>Candidatus Desulforudis</taxon>
    </lineage>
</organism>
<proteinExistence type="inferred from homology"/>
<dbReference type="EC" id="6.1.1.19" evidence="1"/>
<dbReference type="EMBL" id="CP000860">
    <property type="protein sequence ID" value="ACA60668.1"/>
    <property type="molecule type" value="Genomic_DNA"/>
</dbReference>
<dbReference type="RefSeq" id="WP_012303243.1">
    <property type="nucleotide sequence ID" value="NC_010424.1"/>
</dbReference>
<dbReference type="SMR" id="B1I6Q5"/>
<dbReference type="STRING" id="477974.Daud_2181"/>
<dbReference type="KEGG" id="dau:Daud_2181"/>
<dbReference type="eggNOG" id="COG0018">
    <property type="taxonomic scope" value="Bacteria"/>
</dbReference>
<dbReference type="HOGENOM" id="CLU_006406_0_1_9"/>
<dbReference type="OrthoDB" id="9805987at2"/>
<dbReference type="Proteomes" id="UP000008544">
    <property type="component" value="Chromosome"/>
</dbReference>
<dbReference type="GO" id="GO:0005737">
    <property type="term" value="C:cytoplasm"/>
    <property type="evidence" value="ECO:0007669"/>
    <property type="project" value="UniProtKB-SubCell"/>
</dbReference>
<dbReference type="GO" id="GO:0004814">
    <property type="term" value="F:arginine-tRNA ligase activity"/>
    <property type="evidence" value="ECO:0007669"/>
    <property type="project" value="UniProtKB-UniRule"/>
</dbReference>
<dbReference type="GO" id="GO:0005524">
    <property type="term" value="F:ATP binding"/>
    <property type="evidence" value="ECO:0007669"/>
    <property type="project" value="UniProtKB-UniRule"/>
</dbReference>
<dbReference type="GO" id="GO:0006420">
    <property type="term" value="P:arginyl-tRNA aminoacylation"/>
    <property type="evidence" value="ECO:0007669"/>
    <property type="project" value="UniProtKB-UniRule"/>
</dbReference>
<dbReference type="CDD" id="cd07956">
    <property type="entry name" value="Anticodon_Ia_Arg"/>
    <property type="match status" value="1"/>
</dbReference>
<dbReference type="CDD" id="cd00671">
    <property type="entry name" value="ArgRS_core"/>
    <property type="match status" value="1"/>
</dbReference>
<dbReference type="FunFam" id="1.10.730.10:FF:000008">
    <property type="entry name" value="Arginine--tRNA ligase"/>
    <property type="match status" value="1"/>
</dbReference>
<dbReference type="FunFam" id="3.30.1360.70:FF:000003">
    <property type="entry name" value="Arginine--tRNA ligase"/>
    <property type="match status" value="1"/>
</dbReference>
<dbReference type="FunFam" id="3.40.50.620:FF:000062">
    <property type="entry name" value="Arginine--tRNA ligase"/>
    <property type="match status" value="1"/>
</dbReference>
<dbReference type="Gene3D" id="3.30.1360.70">
    <property type="entry name" value="Arginyl tRNA synthetase N-terminal domain"/>
    <property type="match status" value="1"/>
</dbReference>
<dbReference type="Gene3D" id="3.40.50.620">
    <property type="entry name" value="HUPs"/>
    <property type="match status" value="1"/>
</dbReference>
<dbReference type="Gene3D" id="1.10.730.10">
    <property type="entry name" value="Isoleucyl-tRNA Synthetase, Domain 1"/>
    <property type="match status" value="1"/>
</dbReference>
<dbReference type="HAMAP" id="MF_00123">
    <property type="entry name" value="Arg_tRNA_synth"/>
    <property type="match status" value="1"/>
</dbReference>
<dbReference type="InterPro" id="IPR001412">
    <property type="entry name" value="aa-tRNA-synth_I_CS"/>
</dbReference>
<dbReference type="InterPro" id="IPR001278">
    <property type="entry name" value="Arg-tRNA-ligase"/>
</dbReference>
<dbReference type="InterPro" id="IPR005148">
    <property type="entry name" value="Arg-tRNA-synth_N"/>
</dbReference>
<dbReference type="InterPro" id="IPR036695">
    <property type="entry name" value="Arg-tRNA-synth_N_sf"/>
</dbReference>
<dbReference type="InterPro" id="IPR035684">
    <property type="entry name" value="ArgRS_core"/>
</dbReference>
<dbReference type="InterPro" id="IPR008909">
    <property type="entry name" value="DALR_anticod-bd"/>
</dbReference>
<dbReference type="InterPro" id="IPR014729">
    <property type="entry name" value="Rossmann-like_a/b/a_fold"/>
</dbReference>
<dbReference type="InterPro" id="IPR009080">
    <property type="entry name" value="tRNAsynth_Ia_anticodon-bd"/>
</dbReference>
<dbReference type="NCBIfam" id="TIGR00456">
    <property type="entry name" value="argS"/>
    <property type="match status" value="1"/>
</dbReference>
<dbReference type="PANTHER" id="PTHR11956:SF5">
    <property type="entry name" value="ARGININE--TRNA LIGASE, CYTOPLASMIC"/>
    <property type="match status" value="1"/>
</dbReference>
<dbReference type="PANTHER" id="PTHR11956">
    <property type="entry name" value="ARGINYL-TRNA SYNTHETASE"/>
    <property type="match status" value="1"/>
</dbReference>
<dbReference type="Pfam" id="PF03485">
    <property type="entry name" value="Arg_tRNA_synt_N"/>
    <property type="match status" value="1"/>
</dbReference>
<dbReference type="Pfam" id="PF05746">
    <property type="entry name" value="DALR_1"/>
    <property type="match status" value="1"/>
</dbReference>
<dbReference type="Pfam" id="PF00750">
    <property type="entry name" value="tRNA-synt_1d"/>
    <property type="match status" value="1"/>
</dbReference>
<dbReference type="PRINTS" id="PR01038">
    <property type="entry name" value="TRNASYNTHARG"/>
</dbReference>
<dbReference type="SMART" id="SM01016">
    <property type="entry name" value="Arg_tRNA_synt_N"/>
    <property type="match status" value="1"/>
</dbReference>
<dbReference type="SMART" id="SM00836">
    <property type="entry name" value="DALR_1"/>
    <property type="match status" value="1"/>
</dbReference>
<dbReference type="SUPFAM" id="SSF47323">
    <property type="entry name" value="Anticodon-binding domain of a subclass of class I aminoacyl-tRNA synthetases"/>
    <property type="match status" value="1"/>
</dbReference>
<dbReference type="SUPFAM" id="SSF55190">
    <property type="entry name" value="Arginyl-tRNA synthetase (ArgRS), N-terminal 'additional' domain"/>
    <property type="match status" value="1"/>
</dbReference>
<dbReference type="SUPFAM" id="SSF52374">
    <property type="entry name" value="Nucleotidylyl transferase"/>
    <property type="match status" value="1"/>
</dbReference>
<dbReference type="PROSITE" id="PS00178">
    <property type="entry name" value="AA_TRNA_LIGASE_I"/>
    <property type="match status" value="1"/>
</dbReference>
<evidence type="ECO:0000255" key="1">
    <source>
        <dbReference type="HAMAP-Rule" id="MF_00123"/>
    </source>
</evidence>
<comment type="catalytic activity">
    <reaction evidence="1">
        <text>tRNA(Arg) + L-arginine + ATP = L-arginyl-tRNA(Arg) + AMP + diphosphate</text>
        <dbReference type="Rhea" id="RHEA:20301"/>
        <dbReference type="Rhea" id="RHEA-COMP:9658"/>
        <dbReference type="Rhea" id="RHEA-COMP:9673"/>
        <dbReference type="ChEBI" id="CHEBI:30616"/>
        <dbReference type="ChEBI" id="CHEBI:32682"/>
        <dbReference type="ChEBI" id="CHEBI:33019"/>
        <dbReference type="ChEBI" id="CHEBI:78442"/>
        <dbReference type="ChEBI" id="CHEBI:78513"/>
        <dbReference type="ChEBI" id="CHEBI:456215"/>
        <dbReference type="EC" id="6.1.1.19"/>
    </reaction>
</comment>
<comment type="subunit">
    <text evidence="1">Monomer.</text>
</comment>
<comment type="subcellular location">
    <subcellularLocation>
        <location evidence="1">Cytoplasm</location>
    </subcellularLocation>
</comment>
<comment type="similarity">
    <text evidence="1">Belongs to the class-I aminoacyl-tRNA synthetase family.</text>
</comment>
<sequence length="563" mass="62937">MSYLLAGLRAGIERALRGAVEAARPDLGLDSGTAIPPFTVEVPREKNHGDFATNLALLLTKPARRSPRQIAEILVSHLSLPELLVKEVTVAGPGFINFRLDPNWLHGVLPEIETWGEHYGRRNLGGGRKVQVEFVSANPTGLLHMGNARGAALGDSIAALLSFVGFDVTREFYVNDAGHQVENLALSMEARYFQALGRDWPVPEDGYHGEDLIDTAGRFVAEHGDRFASGDPDERRGALLRFALEEKLAAMRATLESFGVRYDVWFSEQSLYDRGVVGETLELLKKRGHLYERDGALWFKAGAFGGDKDEVLVRRNGVPTYFAADIAYHKDKYDRGFDWVINVWGADHHGHVPRMKGALAALGYDPDALDVVIMQLVRLYRGGEIVRMSKRTGRYVTLDELLEEVGRDAARYFFVTRGADSHLDFDLDLAKSRTNENPVYYIQYAHARISSIFRQLEERGRTAPGYRKIPDVTLLKEEAERALIRRLADFPDEVAQAAYDLAPHRIAHYVHDLAGLFHHFYNAHRVLGAGDGLEEARLMLVNCTRVVLRNALTLLGVSAPERM</sequence>
<keyword id="KW-0030">Aminoacyl-tRNA synthetase</keyword>
<keyword id="KW-0067">ATP-binding</keyword>
<keyword id="KW-0963">Cytoplasm</keyword>
<keyword id="KW-0436">Ligase</keyword>
<keyword id="KW-0547">Nucleotide-binding</keyword>
<keyword id="KW-0648">Protein biosynthesis</keyword>
<keyword id="KW-1185">Reference proteome</keyword>
<accession>B1I6Q5</accession>